<protein>
    <recommendedName>
        <fullName evidence="1">Dipeptide and tripeptide permease A</fullName>
    </recommendedName>
</protein>
<sequence length="501" mass="54327">MSTANKKPTESVSLNAFKQPKAFYLIFSIELWERFGYYGLQGIMAVYLVKQLGMSEADSITLFSSFSALVYGLVAIGGWLGDKILGTKRVIMLGAVVLAIGYALVAWSGHDAGIVYMGMAAIAVGNGLFKANPSSLLSTCYAKDDPRLDGAFTMYYMSVNIGSFFSMLATPWLAARYGWSTAFALSVVGMLITVVNFAFCQRWVKSYGSKPDFEPINFRNLLLTIVGIVVLIAVATWLLHNQDIARMVLGVIALGIVIIFGKEAFSMHGAARRKMIVAFILMLQAIIFFVLYSQMPTSLNFFAIRNVEHSILGIAFEPEQYQALNPFWIITGSPILAAIYNRMGDTLPMPMKFAIGMVLCSGAFLILPLGAKFANDAGIVSVNWLIASYGLQSIGELMISGLGLAMVAQLVPQRLMGFIMGSWFLTTAGANIIGGYVANLMAVPSDVTDPLMSLEVYGRVFMQIGIATAVIAVLMLLTAPKLNRMTQDDDTAEKGSKAATV</sequence>
<dbReference type="EMBL" id="AL513382">
    <property type="protein sequence ID" value="CAD01915.1"/>
    <property type="molecule type" value="Genomic_DNA"/>
</dbReference>
<dbReference type="EMBL" id="AE014613">
    <property type="protein sequence ID" value="AAO68970.1"/>
    <property type="molecule type" value="Genomic_DNA"/>
</dbReference>
<dbReference type="RefSeq" id="NP_456078.1">
    <property type="nucleotide sequence ID" value="NC_003198.1"/>
</dbReference>
<dbReference type="RefSeq" id="WP_000100913.1">
    <property type="nucleotide sequence ID" value="NZ_WSUR01000011.1"/>
</dbReference>
<dbReference type="SMR" id="Q8Z6Q5"/>
<dbReference type="STRING" id="220341.gene:17585605"/>
<dbReference type="KEGG" id="stt:t1320"/>
<dbReference type="KEGG" id="sty:STY1670"/>
<dbReference type="PATRIC" id="fig|220341.7.peg.1680"/>
<dbReference type="eggNOG" id="COG3104">
    <property type="taxonomic scope" value="Bacteria"/>
</dbReference>
<dbReference type="HOGENOM" id="CLU_004790_0_0_6"/>
<dbReference type="OMA" id="QMMGVWF"/>
<dbReference type="OrthoDB" id="9772725at2"/>
<dbReference type="Proteomes" id="UP000000541">
    <property type="component" value="Chromosome"/>
</dbReference>
<dbReference type="Proteomes" id="UP000002670">
    <property type="component" value="Chromosome"/>
</dbReference>
<dbReference type="GO" id="GO:0005886">
    <property type="term" value="C:plasma membrane"/>
    <property type="evidence" value="ECO:0007669"/>
    <property type="project" value="UniProtKB-SubCell"/>
</dbReference>
<dbReference type="GO" id="GO:0071916">
    <property type="term" value="F:dipeptide transmembrane transporter activity"/>
    <property type="evidence" value="ECO:0007669"/>
    <property type="project" value="UniProtKB-UniRule"/>
</dbReference>
<dbReference type="GO" id="GO:0015333">
    <property type="term" value="F:peptide:proton symporter activity"/>
    <property type="evidence" value="ECO:0007669"/>
    <property type="project" value="UniProtKB-UniRule"/>
</dbReference>
<dbReference type="GO" id="GO:0042937">
    <property type="term" value="F:tripeptide transmembrane transporter activity"/>
    <property type="evidence" value="ECO:0007669"/>
    <property type="project" value="UniProtKB-UniRule"/>
</dbReference>
<dbReference type="GO" id="GO:0015031">
    <property type="term" value="P:protein transport"/>
    <property type="evidence" value="ECO:0007669"/>
    <property type="project" value="UniProtKB-KW"/>
</dbReference>
<dbReference type="CDD" id="cd17346">
    <property type="entry name" value="MFS_DtpA_like"/>
    <property type="match status" value="1"/>
</dbReference>
<dbReference type="FunFam" id="1.20.1250.20:FF:000017">
    <property type="entry name" value="Dipeptide and tripeptide permease A"/>
    <property type="match status" value="1"/>
</dbReference>
<dbReference type="Gene3D" id="1.20.1250.20">
    <property type="entry name" value="MFS general substrate transporter like domains"/>
    <property type="match status" value="1"/>
</dbReference>
<dbReference type="HAMAP" id="MF_01878">
    <property type="entry name" value="PTR2_DtpA_subfam"/>
    <property type="match status" value="1"/>
</dbReference>
<dbReference type="InterPro" id="IPR023517">
    <property type="entry name" value="AA/pep_transptr_DtpA"/>
</dbReference>
<dbReference type="InterPro" id="IPR005279">
    <property type="entry name" value="Dipep/tripep_permease"/>
</dbReference>
<dbReference type="InterPro" id="IPR020846">
    <property type="entry name" value="MFS_dom"/>
</dbReference>
<dbReference type="InterPro" id="IPR036259">
    <property type="entry name" value="MFS_trans_sf"/>
</dbReference>
<dbReference type="InterPro" id="IPR050171">
    <property type="entry name" value="MFS_Transporters"/>
</dbReference>
<dbReference type="InterPro" id="IPR000109">
    <property type="entry name" value="POT_fam"/>
</dbReference>
<dbReference type="InterPro" id="IPR018456">
    <property type="entry name" value="PTR2_symporter_CS"/>
</dbReference>
<dbReference type="NCBIfam" id="NF007137">
    <property type="entry name" value="PRK09584.1"/>
    <property type="match status" value="1"/>
</dbReference>
<dbReference type="NCBIfam" id="TIGR00924">
    <property type="entry name" value="yjdL_sub1_fam"/>
    <property type="match status" value="1"/>
</dbReference>
<dbReference type="PANTHER" id="PTHR23517:SF15">
    <property type="entry name" value="PROTON-DEPENDENT OLIGOPEPTIDE FAMILY TRANSPORT PROTEIN"/>
    <property type="match status" value="1"/>
</dbReference>
<dbReference type="PANTHER" id="PTHR23517">
    <property type="entry name" value="RESISTANCE PROTEIN MDTM, PUTATIVE-RELATED-RELATED"/>
    <property type="match status" value="1"/>
</dbReference>
<dbReference type="Pfam" id="PF00854">
    <property type="entry name" value="PTR2"/>
    <property type="match status" value="1"/>
</dbReference>
<dbReference type="SUPFAM" id="SSF103473">
    <property type="entry name" value="MFS general substrate transporter"/>
    <property type="match status" value="1"/>
</dbReference>
<dbReference type="PROSITE" id="PS50850">
    <property type="entry name" value="MFS"/>
    <property type="match status" value="1"/>
</dbReference>
<dbReference type="PROSITE" id="PS01022">
    <property type="entry name" value="PTR2_1"/>
    <property type="match status" value="1"/>
</dbReference>
<dbReference type="PROSITE" id="PS01023">
    <property type="entry name" value="PTR2_2"/>
    <property type="match status" value="1"/>
</dbReference>
<proteinExistence type="inferred from homology"/>
<accession>Q8Z6Q5</accession>
<accession>Q7CA18</accession>
<organism>
    <name type="scientific">Salmonella typhi</name>
    <dbReference type="NCBI Taxonomy" id="90370"/>
    <lineage>
        <taxon>Bacteria</taxon>
        <taxon>Pseudomonadati</taxon>
        <taxon>Pseudomonadota</taxon>
        <taxon>Gammaproteobacteria</taxon>
        <taxon>Enterobacterales</taxon>
        <taxon>Enterobacteriaceae</taxon>
        <taxon>Salmonella</taxon>
    </lineage>
</organism>
<comment type="function">
    <text evidence="1">Proton-dependent permease that transports di- and tripeptides.</text>
</comment>
<comment type="subcellular location">
    <subcellularLocation>
        <location evidence="1">Cell inner membrane</location>
        <topology evidence="1">Multi-pass membrane protein</topology>
    </subcellularLocation>
</comment>
<comment type="similarity">
    <text evidence="1">Belongs to the major facilitator superfamily. Proton-dependent oligopeptide transporter (POT/PTR) (TC 2.A.17) family. DtpA subfamily.</text>
</comment>
<keyword id="KW-0997">Cell inner membrane</keyword>
<keyword id="KW-1003">Cell membrane</keyword>
<keyword id="KW-0472">Membrane</keyword>
<keyword id="KW-0571">Peptide transport</keyword>
<keyword id="KW-0653">Protein transport</keyword>
<keyword id="KW-0812">Transmembrane</keyword>
<keyword id="KW-1133">Transmembrane helix</keyword>
<keyword id="KW-0813">Transport</keyword>
<feature type="chain" id="PRO_0000064326" description="Dipeptide and tripeptide permease A">
    <location>
        <begin position="1"/>
        <end position="501"/>
    </location>
</feature>
<feature type="topological domain" description="Cytoplasmic" evidence="1">
    <location>
        <begin position="1"/>
        <end position="21"/>
    </location>
</feature>
<feature type="transmembrane region" description="Helical" evidence="1">
    <location>
        <begin position="22"/>
        <end position="44"/>
    </location>
</feature>
<feature type="topological domain" description="Periplasmic" evidence="1">
    <location>
        <begin position="45"/>
        <end position="59"/>
    </location>
</feature>
<feature type="transmembrane region" description="Helical" evidence="1">
    <location>
        <begin position="60"/>
        <end position="80"/>
    </location>
</feature>
<feature type="topological domain" description="Cytoplasmic" evidence="1">
    <location>
        <begin position="81"/>
        <end position="89"/>
    </location>
</feature>
<feature type="transmembrane region" description="Helical" evidence="1">
    <location>
        <begin position="90"/>
        <end position="110"/>
    </location>
</feature>
<feature type="topological domain" description="Periplasmic" evidence="1">
    <location>
        <position position="111"/>
    </location>
</feature>
<feature type="transmembrane region" description="Helical" evidence="1">
    <location>
        <begin position="112"/>
        <end position="132"/>
    </location>
</feature>
<feature type="topological domain" description="Cytoplasmic" evidence="1">
    <location>
        <begin position="133"/>
        <end position="153"/>
    </location>
</feature>
<feature type="transmembrane region" description="Helical" evidence="1">
    <location>
        <begin position="154"/>
        <end position="174"/>
    </location>
</feature>
<feature type="topological domain" description="Periplasmic" evidence="1">
    <location>
        <begin position="175"/>
        <end position="178"/>
    </location>
</feature>
<feature type="transmembrane region" description="Helical" evidence="1">
    <location>
        <begin position="179"/>
        <end position="199"/>
    </location>
</feature>
<feature type="topological domain" description="Cytoplasmic" evidence="1">
    <location>
        <begin position="200"/>
        <end position="219"/>
    </location>
</feature>
<feature type="transmembrane region" description="Helical" evidence="1">
    <location>
        <begin position="220"/>
        <end position="240"/>
    </location>
</feature>
<feature type="topological domain" description="Periplasmic" evidence="1">
    <location>
        <begin position="241"/>
        <end position="246"/>
    </location>
</feature>
<feature type="transmembrane region" description="Helical" evidence="1">
    <location>
        <begin position="247"/>
        <end position="267"/>
    </location>
</feature>
<feature type="topological domain" description="Cytoplasmic" evidence="1">
    <location>
        <begin position="268"/>
        <end position="274"/>
    </location>
</feature>
<feature type="transmembrane region" description="Helical" evidence="1">
    <location>
        <begin position="275"/>
        <end position="295"/>
    </location>
</feature>
<feature type="topological domain" description="Periplasmic" evidence="1">
    <location>
        <begin position="296"/>
        <end position="320"/>
    </location>
</feature>
<feature type="transmembrane region" description="Helical" evidence="1">
    <location>
        <begin position="321"/>
        <end position="341"/>
    </location>
</feature>
<feature type="topological domain" description="Cytoplasmic" evidence="1">
    <location>
        <begin position="342"/>
        <end position="352"/>
    </location>
</feature>
<feature type="transmembrane region" description="Helical" evidence="1">
    <location>
        <begin position="353"/>
        <end position="373"/>
    </location>
</feature>
<feature type="topological domain" description="Periplasmic" evidence="1">
    <location>
        <begin position="374"/>
        <end position="383"/>
    </location>
</feature>
<feature type="transmembrane region" description="Helical" evidence="1">
    <location>
        <begin position="384"/>
        <end position="404"/>
    </location>
</feature>
<feature type="topological domain" description="Cytoplasmic" evidence="1">
    <location>
        <begin position="405"/>
        <end position="414"/>
    </location>
</feature>
<feature type="transmembrane region" description="Helical" evidence="1">
    <location>
        <begin position="415"/>
        <end position="435"/>
    </location>
</feature>
<feature type="topological domain" description="Periplasmic" evidence="1">
    <location>
        <begin position="436"/>
        <end position="459"/>
    </location>
</feature>
<feature type="transmembrane region" description="Helical" evidence="1">
    <location>
        <begin position="460"/>
        <end position="480"/>
    </location>
</feature>
<feature type="topological domain" description="Cytoplasmic" evidence="1">
    <location>
        <begin position="481"/>
        <end position="501"/>
    </location>
</feature>
<evidence type="ECO:0000255" key="1">
    <source>
        <dbReference type="HAMAP-Rule" id="MF_01878"/>
    </source>
</evidence>
<gene>
    <name evidence="1" type="primary">dtpA</name>
    <name type="synonym">tppB</name>
    <name type="ordered locus">STY1670</name>
    <name type="ordered locus">t1320</name>
</gene>
<name>DTPA_SALTI</name>
<reference key="1">
    <citation type="journal article" date="2001" name="Nature">
        <title>Complete genome sequence of a multiple drug resistant Salmonella enterica serovar Typhi CT18.</title>
        <authorList>
            <person name="Parkhill J."/>
            <person name="Dougan G."/>
            <person name="James K.D."/>
            <person name="Thomson N.R."/>
            <person name="Pickard D."/>
            <person name="Wain J."/>
            <person name="Churcher C.M."/>
            <person name="Mungall K.L."/>
            <person name="Bentley S.D."/>
            <person name="Holden M.T.G."/>
            <person name="Sebaihia M."/>
            <person name="Baker S."/>
            <person name="Basham D."/>
            <person name="Brooks K."/>
            <person name="Chillingworth T."/>
            <person name="Connerton P."/>
            <person name="Cronin A."/>
            <person name="Davis P."/>
            <person name="Davies R.M."/>
            <person name="Dowd L."/>
            <person name="White N."/>
            <person name="Farrar J."/>
            <person name="Feltwell T."/>
            <person name="Hamlin N."/>
            <person name="Haque A."/>
            <person name="Hien T.T."/>
            <person name="Holroyd S."/>
            <person name="Jagels K."/>
            <person name="Krogh A."/>
            <person name="Larsen T.S."/>
            <person name="Leather S."/>
            <person name="Moule S."/>
            <person name="O'Gaora P."/>
            <person name="Parry C."/>
            <person name="Quail M.A."/>
            <person name="Rutherford K.M."/>
            <person name="Simmonds M."/>
            <person name="Skelton J."/>
            <person name="Stevens K."/>
            <person name="Whitehead S."/>
            <person name="Barrell B.G."/>
        </authorList>
    </citation>
    <scope>NUCLEOTIDE SEQUENCE [LARGE SCALE GENOMIC DNA]</scope>
    <source>
        <strain>CT18</strain>
    </source>
</reference>
<reference key="2">
    <citation type="journal article" date="2003" name="J. Bacteriol.">
        <title>Comparative genomics of Salmonella enterica serovar Typhi strains Ty2 and CT18.</title>
        <authorList>
            <person name="Deng W."/>
            <person name="Liou S.-R."/>
            <person name="Plunkett G. III"/>
            <person name="Mayhew G.F."/>
            <person name="Rose D.J."/>
            <person name="Burland V."/>
            <person name="Kodoyianni V."/>
            <person name="Schwartz D.C."/>
            <person name="Blattner F.R."/>
        </authorList>
    </citation>
    <scope>NUCLEOTIDE SEQUENCE [LARGE SCALE GENOMIC DNA]</scope>
    <source>
        <strain>ATCC 700931 / Ty2</strain>
    </source>
</reference>